<name>ARLY_JANMA</name>
<sequence length="464" mass="51716">MTAQLSKKSEAWSARFNEPVSDLVKRYTASVFFDKRLAQVDIQGSLAHAEMLAHQKIISQQDHAEIQRGMAQIQEEIASGKFEWLLDLEDVHLNIEKRLTELVGDAGKRLHTGRSRNDQVATDIRLYVRSEIDNIVGLLRDLRLALLDLAEKHADTILPGFTHMQVAQPITFGHHMLAYVEMFSRDAERMLDCRKRVNRLPLGAAALAGTTFPIDRERVARTLDFEDVCHNSLDAVSDRDFAIEFCAAAALIMTHVSRMSEELVIWMSPRVGFIDIADRFCTGSSIMPQKKNPDVPELARGKTGRVNGHLIALLTLMKGQPLAYNKDNQEDKEPLFDTVDTVVDTLRIFADMATGITVKPDAMRAAALQGYATATDLADYLVKKGLPFRDAHEAVAHAVRACVDRGCDLSDLTLEEMRVFSPLIEADIFEVLTLEGSVAARNHIGGTAPQQVRLAIARHRSKLN</sequence>
<feature type="chain" id="PRO_1000000487" description="Argininosuccinate lyase">
    <location>
        <begin position="1"/>
        <end position="464"/>
    </location>
</feature>
<accession>A6SX31</accession>
<proteinExistence type="inferred from homology"/>
<gene>
    <name evidence="1" type="primary">argH</name>
    <name type="ordered locus">mma_1138</name>
</gene>
<dbReference type="EC" id="4.3.2.1" evidence="1"/>
<dbReference type="EMBL" id="CP000269">
    <property type="protein sequence ID" value="ABR88476.1"/>
    <property type="molecule type" value="Genomic_DNA"/>
</dbReference>
<dbReference type="RefSeq" id="WP_012078995.1">
    <property type="nucleotide sequence ID" value="NC_009659.1"/>
</dbReference>
<dbReference type="SMR" id="A6SX31"/>
<dbReference type="STRING" id="375286.mma_1138"/>
<dbReference type="KEGG" id="mms:mma_1138"/>
<dbReference type="eggNOG" id="COG0165">
    <property type="taxonomic scope" value="Bacteria"/>
</dbReference>
<dbReference type="HOGENOM" id="CLU_027272_2_3_4"/>
<dbReference type="OrthoDB" id="9769623at2"/>
<dbReference type="UniPathway" id="UPA00068">
    <property type="reaction ID" value="UER00114"/>
</dbReference>
<dbReference type="Proteomes" id="UP000006388">
    <property type="component" value="Chromosome"/>
</dbReference>
<dbReference type="GO" id="GO:0005829">
    <property type="term" value="C:cytosol"/>
    <property type="evidence" value="ECO:0007669"/>
    <property type="project" value="TreeGrafter"/>
</dbReference>
<dbReference type="GO" id="GO:0004056">
    <property type="term" value="F:argininosuccinate lyase activity"/>
    <property type="evidence" value="ECO:0007669"/>
    <property type="project" value="UniProtKB-UniRule"/>
</dbReference>
<dbReference type="GO" id="GO:0042450">
    <property type="term" value="P:arginine biosynthetic process via ornithine"/>
    <property type="evidence" value="ECO:0007669"/>
    <property type="project" value="InterPro"/>
</dbReference>
<dbReference type="GO" id="GO:0006526">
    <property type="term" value="P:L-arginine biosynthetic process"/>
    <property type="evidence" value="ECO:0007669"/>
    <property type="project" value="UniProtKB-UniRule"/>
</dbReference>
<dbReference type="CDD" id="cd01359">
    <property type="entry name" value="Argininosuccinate_lyase"/>
    <property type="match status" value="1"/>
</dbReference>
<dbReference type="FunFam" id="1.10.275.10:FF:000002">
    <property type="entry name" value="Argininosuccinate lyase"/>
    <property type="match status" value="1"/>
</dbReference>
<dbReference type="FunFam" id="1.10.40.30:FF:000001">
    <property type="entry name" value="Argininosuccinate lyase"/>
    <property type="match status" value="1"/>
</dbReference>
<dbReference type="FunFam" id="1.20.200.10:FF:000015">
    <property type="entry name" value="argininosuccinate lyase isoform X2"/>
    <property type="match status" value="1"/>
</dbReference>
<dbReference type="Gene3D" id="1.10.40.30">
    <property type="entry name" value="Fumarase/aspartase (C-terminal domain)"/>
    <property type="match status" value="1"/>
</dbReference>
<dbReference type="Gene3D" id="1.20.200.10">
    <property type="entry name" value="Fumarase/aspartase (Central domain)"/>
    <property type="match status" value="1"/>
</dbReference>
<dbReference type="Gene3D" id="1.10.275.10">
    <property type="entry name" value="Fumarase/aspartase (N-terminal domain)"/>
    <property type="match status" value="1"/>
</dbReference>
<dbReference type="HAMAP" id="MF_00006">
    <property type="entry name" value="Arg_succ_lyase"/>
    <property type="match status" value="1"/>
</dbReference>
<dbReference type="InterPro" id="IPR029419">
    <property type="entry name" value="Arg_succ_lyase_C"/>
</dbReference>
<dbReference type="InterPro" id="IPR009049">
    <property type="entry name" value="Argininosuccinate_lyase"/>
</dbReference>
<dbReference type="InterPro" id="IPR024083">
    <property type="entry name" value="Fumarase/histidase_N"/>
</dbReference>
<dbReference type="InterPro" id="IPR020557">
    <property type="entry name" value="Fumarate_lyase_CS"/>
</dbReference>
<dbReference type="InterPro" id="IPR000362">
    <property type="entry name" value="Fumarate_lyase_fam"/>
</dbReference>
<dbReference type="InterPro" id="IPR022761">
    <property type="entry name" value="Fumarate_lyase_N"/>
</dbReference>
<dbReference type="InterPro" id="IPR008948">
    <property type="entry name" value="L-Aspartase-like"/>
</dbReference>
<dbReference type="NCBIfam" id="TIGR00838">
    <property type="entry name" value="argH"/>
    <property type="match status" value="1"/>
</dbReference>
<dbReference type="PANTHER" id="PTHR43814">
    <property type="entry name" value="ARGININOSUCCINATE LYASE"/>
    <property type="match status" value="1"/>
</dbReference>
<dbReference type="PANTHER" id="PTHR43814:SF1">
    <property type="entry name" value="ARGININOSUCCINATE LYASE"/>
    <property type="match status" value="1"/>
</dbReference>
<dbReference type="Pfam" id="PF14698">
    <property type="entry name" value="ASL_C2"/>
    <property type="match status" value="1"/>
</dbReference>
<dbReference type="Pfam" id="PF00206">
    <property type="entry name" value="Lyase_1"/>
    <property type="match status" value="1"/>
</dbReference>
<dbReference type="PRINTS" id="PR00145">
    <property type="entry name" value="ARGSUCLYASE"/>
</dbReference>
<dbReference type="PRINTS" id="PR00149">
    <property type="entry name" value="FUMRATELYASE"/>
</dbReference>
<dbReference type="SUPFAM" id="SSF48557">
    <property type="entry name" value="L-aspartase-like"/>
    <property type="match status" value="1"/>
</dbReference>
<dbReference type="PROSITE" id="PS00163">
    <property type="entry name" value="FUMARATE_LYASES"/>
    <property type="match status" value="1"/>
</dbReference>
<organism>
    <name type="scientific">Janthinobacterium sp. (strain Marseille)</name>
    <name type="common">Minibacterium massiliensis</name>
    <dbReference type="NCBI Taxonomy" id="375286"/>
    <lineage>
        <taxon>Bacteria</taxon>
        <taxon>Pseudomonadati</taxon>
        <taxon>Pseudomonadota</taxon>
        <taxon>Betaproteobacteria</taxon>
        <taxon>Burkholderiales</taxon>
        <taxon>Oxalobacteraceae</taxon>
        <taxon>Janthinobacterium</taxon>
    </lineage>
</organism>
<evidence type="ECO:0000255" key="1">
    <source>
        <dbReference type="HAMAP-Rule" id="MF_00006"/>
    </source>
</evidence>
<keyword id="KW-0028">Amino-acid biosynthesis</keyword>
<keyword id="KW-0055">Arginine biosynthesis</keyword>
<keyword id="KW-0963">Cytoplasm</keyword>
<keyword id="KW-0456">Lyase</keyword>
<reference key="1">
    <citation type="journal article" date="2007" name="PLoS Genet.">
        <title>Genome analysis of Minibacterium massiliensis highlights the convergent evolution of water-living bacteria.</title>
        <authorList>
            <person name="Audic S."/>
            <person name="Robert C."/>
            <person name="Campagna B."/>
            <person name="Parinello H."/>
            <person name="Claverie J.-M."/>
            <person name="Raoult D."/>
            <person name="Drancourt M."/>
        </authorList>
    </citation>
    <scope>NUCLEOTIDE SEQUENCE [LARGE SCALE GENOMIC DNA]</scope>
    <source>
        <strain>Marseille</strain>
    </source>
</reference>
<protein>
    <recommendedName>
        <fullName evidence="1">Argininosuccinate lyase</fullName>
        <shortName evidence="1">ASAL</shortName>
        <ecNumber evidence="1">4.3.2.1</ecNumber>
    </recommendedName>
    <alternativeName>
        <fullName evidence="1">Arginosuccinase</fullName>
    </alternativeName>
</protein>
<comment type="catalytic activity">
    <reaction evidence="1">
        <text>2-(N(omega)-L-arginino)succinate = fumarate + L-arginine</text>
        <dbReference type="Rhea" id="RHEA:24020"/>
        <dbReference type="ChEBI" id="CHEBI:29806"/>
        <dbReference type="ChEBI" id="CHEBI:32682"/>
        <dbReference type="ChEBI" id="CHEBI:57472"/>
        <dbReference type="EC" id="4.3.2.1"/>
    </reaction>
</comment>
<comment type="pathway">
    <text evidence="1">Amino-acid biosynthesis; L-arginine biosynthesis; L-arginine from L-ornithine and carbamoyl phosphate: step 3/3.</text>
</comment>
<comment type="subcellular location">
    <subcellularLocation>
        <location evidence="1">Cytoplasm</location>
    </subcellularLocation>
</comment>
<comment type="similarity">
    <text evidence="1">Belongs to the lyase 1 family. Argininosuccinate lyase subfamily.</text>
</comment>